<dbReference type="EC" id="3.6.1.-" evidence="1"/>
<dbReference type="EC" id="3.6.1.22" evidence="1"/>
<dbReference type="EMBL" id="CU468135">
    <property type="protein sequence ID" value="CAO95219.1"/>
    <property type="molecule type" value="Genomic_DNA"/>
</dbReference>
<dbReference type="RefSeq" id="WP_012439940.1">
    <property type="nucleotide sequence ID" value="NC_010694.1"/>
</dbReference>
<dbReference type="SMR" id="B2VG76"/>
<dbReference type="STRING" id="465817.ETA_01730"/>
<dbReference type="KEGG" id="eta:ETA_01730"/>
<dbReference type="eggNOG" id="COG2816">
    <property type="taxonomic scope" value="Bacteria"/>
</dbReference>
<dbReference type="HOGENOM" id="CLU_037162_0_1_6"/>
<dbReference type="OrthoDB" id="9791656at2"/>
<dbReference type="Proteomes" id="UP000001726">
    <property type="component" value="Chromosome"/>
</dbReference>
<dbReference type="GO" id="GO:0005829">
    <property type="term" value="C:cytosol"/>
    <property type="evidence" value="ECO:0007669"/>
    <property type="project" value="TreeGrafter"/>
</dbReference>
<dbReference type="GO" id="GO:0000287">
    <property type="term" value="F:magnesium ion binding"/>
    <property type="evidence" value="ECO:0007669"/>
    <property type="project" value="UniProtKB-UniRule"/>
</dbReference>
<dbReference type="GO" id="GO:0030145">
    <property type="term" value="F:manganese ion binding"/>
    <property type="evidence" value="ECO:0007669"/>
    <property type="project" value="UniProtKB-UniRule"/>
</dbReference>
<dbReference type="GO" id="GO:0000210">
    <property type="term" value="F:NAD+ diphosphatase activity"/>
    <property type="evidence" value="ECO:0007669"/>
    <property type="project" value="UniProtKB-UniRule"/>
</dbReference>
<dbReference type="GO" id="GO:0035529">
    <property type="term" value="F:NADH pyrophosphatase activity"/>
    <property type="evidence" value="ECO:0007669"/>
    <property type="project" value="TreeGrafter"/>
</dbReference>
<dbReference type="GO" id="GO:0110153">
    <property type="term" value="F:RNA NAD-cap (NMN-forming) hydrolase activity"/>
    <property type="evidence" value="ECO:0007669"/>
    <property type="project" value="RHEA"/>
</dbReference>
<dbReference type="GO" id="GO:0008270">
    <property type="term" value="F:zinc ion binding"/>
    <property type="evidence" value="ECO:0007669"/>
    <property type="project" value="UniProtKB-UniRule"/>
</dbReference>
<dbReference type="GO" id="GO:0019677">
    <property type="term" value="P:NAD catabolic process"/>
    <property type="evidence" value="ECO:0007669"/>
    <property type="project" value="TreeGrafter"/>
</dbReference>
<dbReference type="GO" id="GO:0006734">
    <property type="term" value="P:NADH metabolic process"/>
    <property type="evidence" value="ECO:0007669"/>
    <property type="project" value="TreeGrafter"/>
</dbReference>
<dbReference type="GO" id="GO:0006742">
    <property type="term" value="P:NADP catabolic process"/>
    <property type="evidence" value="ECO:0007669"/>
    <property type="project" value="TreeGrafter"/>
</dbReference>
<dbReference type="CDD" id="cd03429">
    <property type="entry name" value="NUDIX_NADH_pyrophosphatase_Nudt13"/>
    <property type="match status" value="1"/>
</dbReference>
<dbReference type="FunFam" id="3.90.79.10:FF:000004">
    <property type="entry name" value="NADH pyrophosphatase"/>
    <property type="match status" value="1"/>
</dbReference>
<dbReference type="FunFam" id="3.90.79.20:FF:000001">
    <property type="entry name" value="NADH pyrophosphatase"/>
    <property type="match status" value="1"/>
</dbReference>
<dbReference type="Gene3D" id="3.90.79.20">
    <property type="match status" value="1"/>
</dbReference>
<dbReference type="Gene3D" id="3.90.79.10">
    <property type="entry name" value="Nucleoside Triphosphate Pyrophosphohydrolase"/>
    <property type="match status" value="1"/>
</dbReference>
<dbReference type="HAMAP" id="MF_00297">
    <property type="entry name" value="Nudix_NudC"/>
    <property type="match status" value="1"/>
</dbReference>
<dbReference type="InterPro" id="IPR050241">
    <property type="entry name" value="NAD-cap_RNA_hydrolase_NudC"/>
</dbReference>
<dbReference type="InterPro" id="IPR049734">
    <property type="entry name" value="NudC-like_C"/>
</dbReference>
<dbReference type="InterPro" id="IPR015797">
    <property type="entry name" value="NUDIX_hydrolase-like_dom_sf"/>
</dbReference>
<dbReference type="InterPro" id="IPR000086">
    <property type="entry name" value="NUDIX_hydrolase_dom"/>
</dbReference>
<dbReference type="InterPro" id="IPR022925">
    <property type="entry name" value="RNA_Hydrolase_NudC"/>
</dbReference>
<dbReference type="InterPro" id="IPR015376">
    <property type="entry name" value="Znr_NADH_PPase"/>
</dbReference>
<dbReference type="NCBIfam" id="NF001299">
    <property type="entry name" value="PRK00241.1"/>
    <property type="match status" value="1"/>
</dbReference>
<dbReference type="PANTHER" id="PTHR42904:SF6">
    <property type="entry name" value="NAD-CAPPED RNA HYDROLASE NUDT12"/>
    <property type="match status" value="1"/>
</dbReference>
<dbReference type="PANTHER" id="PTHR42904">
    <property type="entry name" value="NUDIX HYDROLASE, NUDC SUBFAMILY"/>
    <property type="match status" value="1"/>
</dbReference>
<dbReference type="Pfam" id="PF00293">
    <property type="entry name" value="NUDIX"/>
    <property type="match status" value="1"/>
</dbReference>
<dbReference type="Pfam" id="PF09297">
    <property type="entry name" value="Zn_ribbon_NUD"/>
    <property type="match status" value="1"/>
</dbReference>
<dbReference type="SUPFAM" id="SSF55811">
    <property type="entry name" value="Nudix"/>
    <property type="match status" value="2"/>
</dbReference>
<dbReference type="PROSITE" id="PS51462">
    <property type="entry name" value="NUDIX"/>
    <property type="match status" value="1"/>
</dbReference>
<protein>
    <recommendedName>
        <fullName evidence="1">NAD-capped RNA hydrolase NudC</fullName>
        <shortName evidence="1">DeNADding enzyme NudC</shortName>
        <ecNumber evidence="1">3.6.1.-</ecNumber>
    </recommendedName>
    <alternativeName>
        <fullName evidence="1">NADH pyrophosphatase</fullName>
        <ecNumber evidence="1">3.6.1.22</ecNumber>
    </alternativeName>
</protein>
<sequence>MEREIVSIDAGWWVVSEEHKIWLPAGELPHGDAASLGLAGSSGSRIGEWQGEAVWLIRGSRPDDMGSLRQLLDRDSALFRLAGRGIQLAEFFRSHQWCGYCGHKMHNSRTEWACLCHHCRQRYYPQIAPCIIVAIRRGAEILLAQHTRHRNGIYTVLAGFVEVGETLEQTVAREVMEESSIKVKNLRYVTSQPWPFPQSLMVAFMADYDDGEISIDRKELIDAGWYRYDALPLLPPAGTVARRLIEDTVALCRAQEENGER</sequence>
<organism>
    <name type="scientific">Erwinia tasmaniensis (strain DSM 17950 / CFBP 7177 / CIP 109463 / NCPPB 4357 / Et1/99)</name>
    <dbReference type="NCBI Taxonomy" id="465817"/>
    <lineage>
        <taxon>Bacteria</taxon>
        <taxon>Pseudomonadati</taxon>
        <taxon>Pseudomonadota</taxon>
        <taxon>Gammaproteobacteria</taxon>
        <taxon>Enterobacterales</taxon>
        <taxon>Erwiniaceae</taxon>
        <taxon>Erwinia</taxon>
    </lineage>
</organism>
<reference key="1">
    <citation type="journal article" date="2008" name="Environ. Microbiol.">
        <title>The genome of Erwinia tasmaniensis strain Et1/99, a non-pathogenic bacterium in the genus Erwinia.</title>
        <authorList>
            <person name="Kube M."/>
            <person name="Migdoll A.M."/>
            <person name="Mueller I."/>
            <person name="Kuhl H."/>
            <person name="Beck A."/>
            <person name="Reinhardt R."/>
            <person name="Geider K."/>
        </authorList>
    </citation>
    <scope>NUCLEOTIDE SEQUENCE [LARGE SCALE GENOMIC DNA]</scope>
    <source>
        <strain>DSM 17950 / CFBP 7177 / CIP 109463 / NCPPB 4357 / Et1/99</strain>
    </source>
</reference>
<proteinExistence type="inferred from homology"/>
<keyword id="KW-0378">Hydrolase</keyword>
<keyword id="KW-0460">Magnesium</keyword>
<keyword id="KW-0464">Manganese</keyword>
<keyword id="KW-0479">Metal-binding</keyword>
<keyword id="KW-0520">NAD</keyword>
<keyword id="KW-1185">Reference proteome</keyword>
<keyword id="KW-0862">Zinc</keyword>
<comment type="function">
    <text evidence="1">mRNA decapping enzyme that specifically removes the nicotinamide adenine dinucleotide (NAD) cap from a subset of mRNAs by hydrolyzing the diphosphate linkage to produce nicotinamide mononucleotide (NMN) and 5' monophosphate mRNA. The NAD-cap is present at the 5'-end of some mRNAs and stabilizes RNA against 5'-processing. Has preference for mRNAs with a 5'-end purine. Catalyzes the hydrolysis of a broad range of dinucleotide pyrophosphates.</text>
</comment>
<comment type="catalytic activity">
    <reaction evidence="1">
        <text>a 5'-end NAD(+)-phospho-ribonucleoside in mRNA + H2O = a 5'-end phospho-adenosine-phospho-ribonucleoside in mRNA + beta-nicotinamide D-ribonucleotide + 2 H(+)</text>
        <dbReference type="Rhea" id="RHEA:60876"/>
        <dbReference type="Rhea" id="RHEA-COMP:15698"/>
        <dbReference type="Rhea" id="RHEA-COMP:15719"/>
        <dbReference type="ChEBI" id="CHEBI:14649"/>
        <dbReference type="ChEBI" id="CHEBI:15377"/>
        <dbReference type="ChEBI" id="CHEBI:15378"/>
        <dbReference type="ChEBI" id="CHEBI:144029"/>
        <dbReference type="ChEBI" id="CHEBI:144051"/>
    </reaction>
    <physiologicalReaction direction="left-to-right" evidence="1">
        <dbReference type="Rhea" id="RHEA:60877"/>
    </physiologicalReaction>
</comment>
<comment type="catalytic activity">
    <reaction evidence="1">
        <text>NAD(+) + H2O = beta-nicotinamide D-ribonucleotide + AMP + 2 H(+)</text>
        <dbReference type="Rhea" id="RHEA:11800"/>
        <dbReference type="ChEBI" id="CHEBI:14649"/>
        <dbReference type="ChEBI" id="CHEBI:15377"/>
        <dbReference type="ChEBI" id="CHEBI:15378"/>
        <dbReference type="ChEBI" id="CHEBI:57540"/>
        <dbReference type="ChEBI" id="CHEBI:456215"/>
        <dbReference type="EC" id="3.6.1.22"/>
    </reaction>
</comment>
<comment type="catalytic activity">
    <reaction evidence="1">
        <text>NADH + H2O = reduced beta-nicotinamide D-ribonucleotide + AMP + 2 H(+)</text>
        <dbReference type="Rhea" id="RHEA:48868"/>
        <dbReference type="ChEBI" id="CHEBI:15377"/>
        <dbReference type="ChEBI" id="CHEBI:15378"/>
        <dbReference type="ChEBI" id="CHEBI:57945"/>
        <dbReference type="ChEBI" id="CHEBI:90832"/>
        <dbReference type="ChEBI" id="CHEBI:456215"/>
        <dbReference type="EC" id="3.6.1.22"/>
    </reaction>
</comment>
<comment type="cofactor">
    <cofactor evidence="1">
        <name>Mg(2+)</name>
        <dbReference type="ChEBI" id="CHEBI:18420"/>
    </cofactor>
    <cofactor evidence="1">
        <name>Mn(2+)</name>
        <dbReference type="ChEBI" id="CHEBI:29035"/>
    </cofactor>
    <text evidence="1">Divalent metal cations. Mg(2+) or Mn(2+).</text>
</comment>
<comment type="cofactor">
    <cofactor evidence="1">
        <name>Zn(2+)</name>
        <dbReference type="ChEBI" id="CHEBI:29105"/>
    </cofactor>
    <text evidence="1">Binds 1 zinc ion per subunit.</text>
</comment>
<comment type="subunit">
    <text evidence="1">Homodimer.</text>
</comment>
<comment type="similarity">
    <text evidence="1">Belongs to the Nudix hydrolase family. NudC subfamily.</text>
</comment>
<gene>
    <name evidence="1" type="primary">nudC</name>
    <name type="ordered locus">ETA_01730</name>
</gene>
<feature type="chain" id="PRO_1000115243" description="NAD-capped RNA hydrolase NudC">
    <location>
        <begin position="1"/>
        <end position="261"/>
    </location>
</feature>
<feature type="domain" description="Nudix hydrolase" evidence="1">
    <location>
        <begin position="125"/>
        <end position="248"/>
    </location>
</feature>
<feature type="short sequence motif" description="Nudix box" evidence="1">
    <location>
        <begin position="159"/>
        <end position="180"/>
    </location>
</feature>
<feature type="binding site" evidence="1">
    <location>
        <position position="69"/>
    </location>
    <ligand>
        <name>substrate</name>
    </ligand>
</feature>
<feature type="binding site" evidence="1">
    <location>
        <position position="98"/>
    </location>
    <ligand>
        <name>Zn(2+)</name>
        <dbReference type="ChEBI" id="CHEBI:29105"/>
    </ligand>
</feature>
<feature type="binding site" evidence="1">
    <location>
        <position position="101"/>
    </location>
    <ligand>
        <name>Zn(2+)</name>
        <dbReference type="ChEBI" id="CHEBI:29105"/>
    </ligand>
</feature>
<feature type="binding site" evidence="1">
    <location>
        <position position="111"/>
    </location>
    <ligand>
        <name>substrate</name>
    </ligand>
</feature>
<feature type="binding site" evidence="1">
    <location>
        <position position="116"/>
    </location>
    <ligand>
        <name>Zn(2+)</name>
        <dbReference type="ChEBI" id="CHEBI:29105"/>
    </ligand>
</feature>
<feature type="binding site" evidence="1">
    <location>
        <position position="119"/>
    </location>
    <ligand>
        <name>Zn(2+)</name>
        <dbReference type="ChEBI" id="CHEBI:29105"/>
    </ligand>
</feature>
<feature type="binding site" evidence="1">
    <location>
        <position position="124"/>
    </location>
    <ligand>
        <name>substrate</name>
    </ligand>
</feature>
<feature type="binding site" evidence="1">
    <location>
        <position position="158"/>
    </location>
    <ligand>
        <name>a divalent metal cation</name>
        <dbReference type="ChEBI" id="CHEBI:60240"/>
        <label>1</label>
    </ligand>
</feature>
<feature type="binding site" evidence="1">
    <location>
        <position position="174"/>
    </location>
    <ligand>
        <name>a divalent metal cation</name>
        <dbReference type="ChEBI" id="CHEBI:60240"/>
        <label>2</label>
    </ligand>
</feature>
<feature type="binding site" evidence="1">
    <location>
        <position position="174"/>
    </location>
    <ligand>
        <name>a divalent metal cation</name>
        <dbReference type="ChEBI" id="CHEBI:60240"/>
        <label>3</label>
    </ligand>
</feature>
<feature type="binding site" evidence="1">
    <location>
        <position position="178"/>
    </location>
    <ligand>
        <name>a divalent metal cation</name>
        <dbReference type="ChEBI" id="CHEBI:60240"/>
        <label>1</label>
    </ligand>
</feature>
<feature type="binding site" evidence="1">
    <location>
        <position position="178"/>
    </location>
    <ligand>
        <name>a divalent metal cation</name>
        <dbReference type="ChEBI" id="CHEBI:60240"/>
        <label>3</label>
    </ligand>
</feature>
<feature type="binding site" evidence="1">
    <location>
        <begin position="192"/>
        <end position="199"/>
    </location>
    <ligand>
        <name>substrate</name>
    </ligand>
</feature>
<feature type="binding site" evidence="1">
    <location>
        <position position="219"/>
    </location>
    <ligand>
        <name>a divalent metal cation</name>
        <dbReference type="ChEBI" id="CHEBI:60240"/>
        <label>1</label>
    </ligand>
</feature>
<feature type="binding site" evidence="1">
    <location>
        <position position="219"/>
    </location>
    <ligand>
        <name>a divalent metal cation</name>
        <dbReference type="ChEBI" id="CHEBI:60240"/>
        <label>3</label>
    </ligand>
</feature>
<feature type="binding site" evidence="1">
    <location>
        <position position="241"/>
    </location>
    <ligand>
        <name>substrate</name>
    </ligand>
</feature>
<name>NUDC_ERWT9</name>
<evidence type="ECO:0000255" key="1">
    <source>
        <dbReference type="HAMAP-Rule" id="MF_00297"/>
    </source>
</evidence>
<accession>B2VG76</accession>